<dbReference type="EC" id="3.1.11.6" evidence="1"/>
<dbReference type="EMBL" id="CP001113">
    <property type="protein sequence ID" value="ACF63041.1"/>
    <property type="molecule type" value="Genomic_DNA"/>
</dbReference>
<dbReference type="RefSeq" id="WP_001124944.1">
    <property type="nucleotide sequence ID" value="NZ_CCMR01000003.1"/>
</dbReference>
<dbReference type="SMR" id="B4SWR6"/>
<dbReference type="KEGG" id="see:SNSL254_A0471"/>
<dbReference type="HOGENOM" id="CLU_145918_3_3_6"/>
<dbReference type="Proteomes" id="UP000008824">
    <property type="component" value="Chromosome"/>
</dbReference>
<dbReference type="GO" id="GO:0005829">
    <property type="term" value="C:cytosol"/>
    <property type="evidence" value="ECO:0007669"/>
    <property type="project" value="TreeGrafter"/>
</dbReference>
<dbReference type="GO" id="GO:0009318">
    <property type="term" value="C:exodeoxyribonuclease VII complex"/>
    <property type="evidence" value="ECO:0007669"/>
    <property type="project" value="InterPro"/>
</dbReference>
<dbReference type="GO" id="GO:0008855">
    <property type="term" value="F:exodeoxyribonuclease VII activity"/>
    <property type="evidence" value="ECO:0007669"/>
    <property type="project" value="UniProtKB-UniRule"/>
</dbReference>
<dbReference type="GO" id="GO:0006308">
    <property type="term" value="P:DNA catabolic process"/>
    <property type="evidence" value="ECO:0007669"/>
    <property type="project" value="UniProtKB-UniRule"/>
</dbReference>
<dbReference type="FunFam" id="1.10.287.1040:FF:000001">
    <property type="entry name" value="Exodeoxyribonuclease 7 small subunit"/>
    <property type="match status" value="1"/>
</dbReference>
<dbReference type="Gene3D" id="1.10.287.1040">
    <property type="entry name" value="Exonuclease VII, small subunit"/>
    <property type="match status" value="1"/>
</dbReference>
<dbReference type="HAMAP" id="MF_00337">
    <property type="entry name" value="Exonuc_7_S"/>
    <property type="match status" value="1"/>
</dbReference>
<dbReference type="InterPro" id="IPR003761">
    <property type="entry name" value="Exonuc_VII_S"/>
</dbReference>
<dbReference type="InterPro" id="IPR037004">
    <property type="entry name" value="Exonuc_VII_ssu_sf"/>
</dbReference>
<dbReference type="NCBIfam" id="NF002137">
    <property type="entry name" value="PRK00977.1-1"/>
    <property type="match status" value="1"/>
</dbReference>
<dbReference type="NCBIfam" id="NF002140">
    <property type="entry name" value="PRK00977.1-4"/>
    <property type="match status" value="1"/>
</dbReference>
<dbReference type="NCBIfam" id="TIGR01280">
    <property type="entry name" value="xseB"/>
    <property type="match status" value="1"/>
</dbReference>
<dbReference type="PANTHER" id="PTHR34137">
    <property type="entry name" value="EXODEOXYRIBONUCLEASE 7 SMALL SUBUNIT"/>
    <property type="match status" value="1"/>
</dbReference>
<dbReference type="PANTHER" id="PTHR34137:SF1">
    <property type="entry name" value="EXODEOXYRIBONUCLEASE 7 SMALL SUBUNIT"/>
    <property type="match status" value="1"/>
</dbReference>
<dbReference type="Pfam" id="PF02609">
    <property type="entry name" value="Exonuc_VII_S"/>
    <property type="match status" value="1"/>
</dbReference>
<dbReference type="PIRSF" id="PIRSF006488">
    <property type="entry name" value="Exonuc_VII_S"/>
    <property type="match status" value="1"/>
</dbReference>
<dbReference type="SUPFAM" id="SSF116842">
    <property type="entry name" value="XseB-like"/>
    <property type="match status" value="1"/>
</dbReference>
<evidence type="ECO:0000255" key="1">
    <source>
        <dbReference type="HAMAP-Rule" id="MF_00337"/>
    </source>
</evidence>
<sequence length="80" mass="8932">MPKKNEAPASFETALSELEHIVTRLESGDLPLEDALNEFERGVQLARQGQAKLQQAEQRVQILLSDNEEASPEPFIADNE</sequence>
<protein>
    <recommendedName>
        <fullName evidence="1">Exodeoxyribonuclease 7 small subunit</fullName>
        <ecNumber evidence="1">3.1.11.6</ecNumber>
    </recommendedName>
    <alternativeName>
        <fullName evidence="1">Exodeoxyribonuclease VII small subunit</fullName>
        <shortName evidence="1">Exonuclease VII small subunit</shortName>
    </alternativeName>
</protein>
<reference key="1">
    <citation type="journal article" date="2011" name="J. Bacteriol.">
        <title>Comparative genomics of 28 Salmonella enterica isolates: evidence for CRISPR-mediated adaptive sublineage evolution.</title>
        <authorList>
            <person name="Fricke W.F."/>
            <person name="Mammel M.K."/>
            <person name="McDermott P.F."/>
            <person name="Tartera C."/>
            <person name="White D.G."/>
            <person name="Leclerc J.E."/>
            <person name="Ravel J."/>
            <person name="Cebula T.A."/>
        </authorList>
    </citation>
    <scope>NUCLEOTIDE SEQUENCE [LARGE SCALE GENOMIC DNA]</scope>
    <source>
        <strain>SL254</strain>
    </source>
</reference>
<proteinExistence type="inferred from homology"/>
<organism>
    <name type="scientific">Salmonella newport (strain SL254)</name>
    <dbReference type="NCBI Taxonomy" id="423368"/>
    <lineage>
        <taxon>Bacteria</taxon>
        <taxon>Pseudomonadati</taxon>
        <taxon>Pseudomonadota</taxon>
        <taxon>Gammaproteobacteria</taxon>
        <taxon>Enterobacterales</taxon>
        <taxon>Enterobacteriaceae</taxon>
        <taxon>Salmonella</taxon>
    </lineage>
</organism>
<keyword id="KW-0963">Cytoplasm</keyword>
<keyword id="KW-0269">Exonuclease</keyword>
<keyword id="KW-0378">Hydrolase</keyword>
<keyword id="KW-0540">Nuclease</keyword>
<feature type="chain" id="PRO_1000119954" description="Exodeoxyribonuclease 7 small subunit">
    <location>
        <begin position="1"/>
        <end position="80"/>
    </location>
</feature>
<gene>
    <name evidence="1" type="primary">xseB</name>
    <name type="ordered locus">SNSL254_A0471</name>
</gene>
<name>EX7S_SALNS</name>
<accession>B4SWR6</accession>
<comment type="function">
    <text evidence="1">Bidirectionally degrades single-stranded DNA into large acid-insoluble oligonucleotides, which are then degraded further into small acid-soluble oligonucleotides.</text>
</comment>
<comment type="catalytic activity">
    <reaction evidence="1">
        <text>Exonucleolytic cleavage in either 5'- to 3'- or 3'- to 5'-direction to yield nucleoside 5'-phosphates.</text>
        <dbReference type="EC" id="3.1.11.6"/>
    </reaction>
</comment>
<comment type="subunit">
    <text evidence="1">Heterooligomer composed of large and small subunits.</text>
</comment>
<comment type="subcellular location">
    <subcellularLocation>
        <location evidence="1">Cytoplasm</location>
    </subcellularLocation>
</comment>
<comment type="similarity">
    <text evidence="1">Belongs to the XseB family.</text>
</comment>